<accession>A3MTK6</accession>
<reference key="1">
    <citation type="submission" date="2007-02" db="EMBL/GenBank/DDBJ databases">
        <title>Complete sequence of Pyrobaculum calidifontis JCM 11548.</title>
        <authorList>
            <consortium name="US DOE Joint Genome Institute"/>
            <person name="Copeland A."/>
            <person name="Lucas S."/>
            <person name="Lapidus A."/>
            <person name="Barry K."/>
            <person name="Glavina del Rio T."/>
            <person name="Dalin E."/>
            <person name="Tice H."/>
            <person name="Pitluck S."/>
            <person name="Chain P."/>
            <person name="Malfatti S."/>
            <person name="Shin M."/>
            <person name="Vergez L."/>
            <person name="Schmutz J."/>
            <person name="Larimer F."/>
            <person name="Land M."/>
            <person name="Hauser L."/>
            <person name="Kyrpides N."/>
            <person name="Mikhailova N."/>
            <person name="Cozen A.E."/>
            <person name="Fitz-Gibbon S.T."/>
            <person name="House C.H."/>
            <person name="Saltikov C."/>
            <person name="Lowe T.M."/>
            <person name="Richardson P."/>
        </authorList>
    </citation>
    <scope>NUCLEOTIDE SEQUENCE [LARGE SCALE GENOMIC DNA]</scope>
    <source>
        <strain>DSM 21063 / JCM 11548 / VA1</strain>
    </source>
</reference>
<reference key="2">
    <citation type="journal article" date="2013" name="J. Am. Chem. Soc.">
        <title>Toroidal structure and DNA cleavage by the CRISPR-associated [4Fe-4S] cluster containing Cas4 nuclease SSO0001 from Sulfolobus solfataricus.</title>
        <authorList>
            <person name="Lemak S."/>
            <person name="Beloglazova N."/>
            <person name="Nocek B."/>
            <person name="Skarina T."/>
            <person name="Flick R."/>
            <person name="Brown G."/>
            <person name="Popovic A."/>
            <person name="Joachimiak A."/>
            <person name="Savchenko A."/>
            <person name="Yakunin A.F."/>
        </authorList>
    </citation>
    <scope>FUNCTION</scope>
    <scope>COFACTOR</scope>
</reference>
<reference key="3">
    <citation type="journal article" date="2014" name="Nucleic Acids Res.">
        <title>The CRISPR-associated Cas4 protein Pcal_0546 from Pyrobaculum calidifontis contains a [2Fe-2S] cluster: crystal structure and nuclease activity.</title>
        <authorList>
            <person name="Lemak S."/>
            <person name="Nocek B."/>
            <person name="Beloglazova N."/>
            <person name="Skarina T."/>
            <person name="Flick R."/>
            <person name="Brown G."/>
            <person name="Joachimiak A."/>
            <person name="Savchenko A."/>
            <person name="Yakunin A.F."/>
        </authorList>
    </citation>
    <scope>X-RAY CRYSTALLOGRAPHY (2.65 ANGSTROMS) IN COMPLEX WITH IRON-SULFUR (2FE-2S)</scope>
    <scope>FUNCTION</scope>
    <scope>CATALYTIC ACTIVITY</scope>
    <scope>BIOPHYSICOCHEMICAL PROPERTIES</scope>
    <scope>COFACTOR</scope>
    <scope>SUBUNIT</scope>
    <scope>MUTAGENESIS OF CYS-64; ASP-123; GLU-136; PHE-141; GLN-149; TYR-153; TYR-166; CYS-200; CYS-203 AND CYS-209</scope>
    <source>
        <strain>DSM 21063 / JCM 11548 / VA1</strain>
    </source>
</reference>
<organism>
    <name type="scientific">Pyrobaculum calidifontis (strain DSM 21063 / JCM 11548 / VA1)</name>
    <dbReference type="NCBI Taxonomy" id="410359"/>
    <lineage>
        <taxon>Archaea</taxon>
        <taxon>Thermoproteota</taxon>
        <taxon>Thermoprotei</taxon>
        <taxon>Thermoproteales</taxon>
        <taxon>Thermoproteaceae</taxon>
        <taxon>Pyrobaculum</taxon>
    </lineage>
</organism>
<protein>
    <recommendedName>
        <fullName>CRISPR-associated exonuclease Cas4</fullName>
        <ecNumber evidence="2">3.1.12.1</ecNumber>
    </recommendedName>
</protein>
<proteinExistence type="evidence at protein level"/>
<dbReference type="EC" id="3.1.12.1" evidence="2"/>
<dbReference type="EMBL" id="CP000561">
    <property type="protein sequence ID" value="ABO07973.1"/>
    <property type="molecule type" value="Genomic_DNA"/>
</dbReference>
<dbReference type="RefSeq" id="WP_011849231.1">
    <property type="nucleotide sequence ID" value="NC_009073.1"/>
</dbReference>
<dbReference type="PDB" id="4R5Q">
    <property type="method" value="X-ray"/>
    <property type="resolution" value="2.65 A"/>
    <property type="chains" value="A=1-213"/>
</dbReference>
<dbReference type="PDBsum" id="4R5Q"/>
<dbReference type="SMR" id="A3MTK6"/>
<dbReference type="STRING" id="410359.Pcal_0546"/>
<dbReference type="GeneID" id="4909024"/>
<dbReference type="KEGG" id="pcl:Pcal_0546"/>
<dbReference type="eggNOG" id="arCOG00790">
    <property type="taxonomic scope" value="Archaea"/>
</dbReference>
<dbReference type="HOGENOM" id="CLU_1507438_0_0_2"/>
<dbReference type="OrthoDB" id="24369at2157"/>
<dbReference type="BRENDA" id="3.1.12.1">
    <property type="organism ID" value="7282"/>
</dbReference>
<dbReference type="EvolutionaryTrace" id="A3MTK6"/>
<dbReference type="Proteomes" id="UP000001431">
    <property type="component" value="Chromosome"/>
</dbReference>
<dbReference type="GO" id="GO:0051537">
    <property type="term" value="F:2 iron, 2 sulfur cluster binding"/>
    <property type="evidence" value="ECO:0000314"/>
    <property type="project" value="UniProtKB"/>
</dbReference>
<dbReference type="GO" id="GO:0046872">
    <property type="term" value="F:metal ion binding"/>
    <property type="evidence" value="ECO:0007669"/>
    <property type="project" value="UniProtKB-KW"/>
</dbReference>
<dbReference type="GO" id="GO:0045145">
    <property type="term" value="F:single-stranded DNA 5'-3' DNA exonuclease activity"/>
    <property type="evidence" value="ECO:0000314"/>
    <property type="project" value="UniProtKB"/>
</dbReference>
<dbReference type="GO" id="GO:0000014">
    <property type="term" value="F:single-stranded DNA endodeoxyribonuclease activity"/>
    <property type="evidence" value="ECO:0000314"/>
    <property type="project" value="UniProtKB"/>
</dbReference>
<dbReference type="GO" id="GO:0051607">
    <property type="term" value="P:defense response to virus"/>
    <property type="evidence" value="ECO:0007669"/>
    <property type="project" value="UniProtKB-KW"/>
</dbReference>
<dbReference type="Gene3D" id="3.90.320.10">
    <property type="match status" value="1"/>
</dbReference>
<dbReference type="InterPro" id="IPR051827">
    <property type="entry name" value="Cas4_exonuclease"/>
</dbReference>
<dbReference type="InterPro" id="IPR013343">
    <property type="entry name" value="CRISPR-assoc_prot_Cas4"/>
</dbReference>
<dbReference type="InterPro" id="IPR022765">
    <property type="entry name" value="Dna2/Cas4_DUF83"/>
</dbReference>
<dbReference type="InterPro" id="IPR011604">
    <property type="entry name" value="PDDEXK-like_dom_sf"/>
</dbReference>
<dbReference type="NCBIfam" id="TIGR00372">
    <property type="entry name" value="cas4"/>
    <property type="match status" value="1"/>
</dbReference>
<dbReference type="PANTHER" id="PTHR36531">
    <property type="entry name" value="CRISPR-ASSOCIATED EXONUCLEASE CAS4"/>
    <property type="match status" value="1"/>
</dbReference>
<dbReference type="PANTHER" id="PTHR36531:SF2">
    <property type="entry name" value="CRISPR-ASSOCIATED EXONUCLEASE CAS4"/>
    <property type="match status" value="1"/>
</dbReference>
<dbReference type="Pfam" id="PF01930">
    <property type="entry name" value="Cas_Cas4"/>
    <property type="match status" value="1"/>
</dbReference>
<feature type="chain" id="PRO_0000430935" description="CRISPR-associated exonuclease Cas4">
    <location>
        <begin position="1"/>
        <end position="213"/>
    </location>
</feature>
<feature type="binding site" evidence="2">
    <location>
        <position position="64"/>
    </location>
    <ligand>
        <name>[2Fe-2S] cluster</name>
        <dbReference type="ChEBI" id="CHEBI:190135"/>
    </ligand>
</feature>
<feature type="binding site" evidence="4">
    <location>
        <position position="94"/>
    </location>
    <ligand>
        <name>Mg(2+)</name>
        <dbReference type="ChEBI" id="CHEBI:18420"/>
    </ligand>
</feature>
<feature type="binding site" evidence="4">
    <location>
        <position position="123"/>
    </location>
    <ligand>
        <name>Mg(2+)</name>
        <dbReference type="ChEBI" id="CHEBI:18420"/>
    </ligand>
</feature>
<feature type="binding site" evidence="4">
    <location>
        <position position="136"/>
    </location>
    <ligand>
        <name>Mg(2+)</name>
        <dbReference type="ChEBI" id="CHEBI:18420"/>
    </ligand>
</feature>
<feature type="binding site" evidence="4">
    <location>
        <position position="137"/>
    </location>
    <ligand>
        <name>Mg(2+)</name>
        <dbReference type="ChEBI" id="CHEBI:18420"/>
    </ligand>
</feature>
<feature type="binding site" evidence="2">
    <location>
        <position position="200"/>
    </location>
    <ligand>
        <name>[2Fe-2S] cluster</name>
        <dbReference type="ChEBI" id="CHEBI:190135"/>
    </ligand>
</feature>
<feature type="binding site" evidence="2">
    <location>
        <position position="203"/>
    </location>
    <ligand>
        <name>[2Fe-2S] cluster</name>
        <dbReference type="ChEBI" id="CHEBI:190135"/>
    </ligand>
</feature>
<feature type="binding site" evidence="2">
    <location>
        <position position="209"/>
    </location>
    <ligand>
        <name>[2Fe-2S] cluster</name>
        <dbReference type="ChEBI" id="CHEBI:190135"/>
    </ligand>
</feature>
<feature type="mutagenesis site" description="Probably no 2Fe-2S center assembly, wild-type nuclease and DNA unwinding." evidence="2">
    <original>C</original>
    <variation>A</variation>
    <location>
        <position position="64"/>
    </location>
</feature>
<feature type="mutagenesis site" description="No exonuclease or endonuclease, reduced DNA unwinding activity." evidence="2">
    <original>D</original>
    <variation>A</variation>
    <location>
        <position position="123"/>
    </location>
</feature>
<feature type="mutagenesis site" description="No exonuclease or endonuclease, very little DNA unwinding activity." evidence="2">
    <original>E</original>
    <variation>A</variation>
    <location>
        <position position="136"/>
    </location>
</feature>
<feature type="mutagenesis site" description="Increased endonuclease activity." evidence="2">
    <original>F</original>
    <variation>A</variation>
    <location>
        <position position="141"/>
    </location>
</feature>
<feature type="mutagenesis site" description="No exonuclease or endonuclease, very little DNA unwinding activity." evidence="2">
    <original>Q</original>
    <variation>A</variation>
    <location>
        <position position="149"/>
    </location>
</feature>
<feature type="mutagenesis site" description="No exonuclease or endonuclease, reduced DNA unwinding activity." evidence="2">
    <original>Y</original>
    <variation>A</variation>
    <location>
        <position position="153"/>
    </location>
</feature>
<feature type="mutagenesis site" description="No exonuclease or endonuclease, reduced DNA unwinding activity." evidence="2">
    <original>Y</original>
    <variation>A</variation>
    <location>
        <position position="166"/>
    </location>
</feature>
<feature type="mutagenesis site" description="Probably no 2Fe-2S center assembly, wild-type nuclease and DNA unwinding." evidence="2">
    <original>C</original>
    <variation>A</variation>
    <location>
        <position position="200"/>
    </location>
</feature>
<feature type="mutagenesis site" description="Probably no 2Fe-2S center assembly, wild-type nuclease and DNA unwinding." evidence="2">
    <original>C</original>
    <variation>A</variation>
    <location>
        <position position="203"/>
    </location>
</feature>
<feature type="mutagenesis site" description="Probably no 2Fe-2S center assembly, wild-type nuclease and DNA unwinding." evidence="2">
    <original>C</original>
    <variation>A</variation>
    <location>
        <position position="209"/>
    </location>
</feature>
<feature type="helix" evidence="6">
    <location>
        <begin position="9"/>
        <end position="11"/>
    </location>
</feature>
<feature type="helix" evidence="6">
    <location>
        <begin position="15"/>
        <end position="18"/>
    </location>
</feature>
<feature type="helix" evidence="6">
    <location>
        <begin position="24"/>
        <end position="33"/>
    </location>
</feature>
<feature type="strand" evidence="6">
    <location>
        <begin position="37"/>
        <end position="40"/>
    </location>
</feature>
<feature type="strand" evidence="6">
    <location>
        <begin position="43"/>
        <end position="47"/>
    </location>
</feature>
<feature type="helix" evidence="6">
    <location>
        <begin position="55"/>
        <end position="63"/>
    </location>
</feature>
<feature type="helix" evidence="6">
    <location>
        <begin position="65"/>
        <end position="74"/>
    </location>
</feature>
<feature type="strand" evidence="6">
    <location>
        <begin position="76"/>
        <end position="80"/>
    </location>
</feature>
<feature type="turn" evidence="6">
    <location>
        <begin position="81"/>
        <end position="83"/>
    </location>
</feature>
<feature type="helix" evidence="6">
    <location>
        <begin position="84"/>
        <end position="101"/>
    </location>
</feature>
<feature type="strand" evidence="6">
    <location>
        <begin position="107"/>
        <end position="115"/>
    </location>
</feature>
<feature type="strand" evidence="6">
    <location>
        <begin position="118"/>
        <end position="128"/>
    </location>
</feature>
<feature type="strand" evidence="6">
    <location>
        <begin position="131"/>
        <end position="137"/>
    </location>
</feature>
<feature type="helix" evidence="6">
    <location>
        <begin position="143"/>
        <end position="157"/>
    </location>
</feature>
<feature type="strand" evidence="6">
    <location>
        <begin position="160"/>
        <end position="165"/>
    </location>
</feature>
<feature type="strand" evidence="6">
    <location>
        <begin position="170"/>
        <end position="174"/>
    </location>
</feature>
<feature type="helix" evidence="6">
    <location>
        <begin position="177"/>
        <end position="180"/>
    </location>
</feature>
<feature type="helix" evidence="6">
    <location>
        <begin position="181"/>
        <end position="191"/>
    </location>
</feature>
<feature type="strand" evidence="6">
    <location>
        <begin position="200"/>
        <end position="202"/>
    </location>
</feature>
<feature type="turn" evidence="6">
    <location>
        <begin position="204"/>
        <end position="207"/>
    </location>
</feature>
<feature type="helix" evidence="6">
    <location>
        <begin position="208"/>
        <end position="211"/>
    </location>
</feature>
<keyword id="KW-0001">2Fe-2S</keyword>
<keyword id="KW-0002">3D-structure</keyword>
<keyword id="KW-0051">Antiviral defense</keyword>
<keyword id="KW-0269">Exonuclease</keyword>
<keyword id="KW-0378">Hydrolase</keyword>
<keyword id="KW-0408">Iron</keyword>
<keyword id="KW-0411">Iron-sulfur</keyword>
<keyword id="KW-0464">Manganese</keyword>
<keyword id="KW-0479">Metal-binding</keyword>
<keyword id="KW-0540">Nuclease</keyword>
<evidence type="ECO:0000269" key="1">
    <source>
    </source>
</evidence>
<evidence type="ECO:0000269" key="2">
    <source>
    </source>
</evidence>
<evidence type="ECO:0000303" key="3">
    <source>
    </source>
</evidence>
<evidence type="ECO:0000303" key="4">
    <source>
    </source>
</evidence>
<evidence type="ECO:0000305" key="5"/>
<evidence type="ECO:0007829" key="6">
    <source>
        <dbReference type="PDB" id="4R5Q"/>
    </source>
</evidence>
<sequence>MELLSPKPLCSVVNCEDLEKLDHVSALNELRREQEIFKLLPGIYAHRYDFRRVSPSIINDFEYCPRLLWVQHKLGLKLLSEKSVVSIIRGRILHERYERLLSQYENVVAEYKVEIGDLVGVVDLVIKRGGEYIPVEIKTGFSKEAHKTQLQIYISMLKARFGYLVYRNHVEVVHRNDAALDVLKKIREILSAREAPPAKCNSCIFKPICKNLL</sequence>
<gene>
    <name type="primary">cas4</name>
    <name type="ordered locus">Pcal_0546</name>
</gene>
<name>CAS4_PYRCJ</name>
<comment type="function">
    <text evidence="1 2">CRISPR (clustered regularly interspaced short palindromic repeat) is an adaptive immune system that provides protection against mobile genetic elements (viruses, transposable elements and conjugative plasmids). CRISPR clusters contain sequences complementary to antecedent mobile elements and target invading nucleic acids. CRISPR clusters are transcribed and processed into CRISPR RNA (crRNA). A ssDNA exonuclease that has 5' to 3' activity, yielding 5'-OH and 3'-phosphate groups. Has Mn(2+)-dependent endonuclease activity on circular ssDNA. Can unwind dsDNA; unwinding does not require ATP.</text>
</comment>
<comment type="catalytic activity">
    <reaction evidence="2">
        <text>exonucleolytic cleavage in the 5'- to 3'-direction to yield nucleoside 3'-phosphates.</text>
        <dbReference type="EC" id="3.1.12.1"/>
    </reaction>
</comment>
<comment type="cofactor">
    <cofactor evidence="2 3">
        <name>[2Fe-2S] cluster</name>
        <dbReference type="ChEBI" id="CHEBI:190135"/>
    </cofactor>
    <text evidence="2 3">Binds 1 [2Fe-2S] cluster per subunit. Not required for nuclease activity, since mutation of the Cys residues leads to a colorless but active protein.</text>
</comment>
<comment type="cofactor">
    <cofactor evidence="2">
        <name>Mn(2+)</name>
        <dbReference type="ChEBI" id="CHEBI:29035"/>
    </cofactor>
    <cofactor evidence="2">
        <name>Co(2+)</name>
        <dbReference type="ChEBI" id="CHEBI:48828"/>
    </cofactor>
    <text evidence="2">Mn(2+) required for ssDNA cleavage activity. Can also utilize Co(2+) and to a lesser extent Mg(2+).</text>
</comment>
<comment type="biophysicochemical properties">
    <phDependence>
        <text evidence="2">Optimum pH is 7-9.</text>
    </phDependence>
    <temperatureDependence>
        <text evidence="2">Optimum temperature is 50-70 degrees Celsius.</text>
    </temperatureDependence>
</comment>
<comment type="subunit">
    <text evidence="2">Monomer.</text>
</comment>
<comment type="similarity">
    <text evidence="5">Belongs to the CRISPR-associated exonuclease Cas4 family.</text>
</comment>